<protein>
    <recommendedName>
        <fullName evidence="1">Ion-translocating oxidoreductase complex subunit B</fullName>
        <ecNumber evidence="1">7.-.-.-</ecNumber>
    </recommendedName>
    <alternativeName>
        <fullName evidence="1">Rnf electron transport complex subunit B</fullName>
    </alternativeName>
</protein>
<dbReference type="EC" id="7.-.-.-" evidence="1"/>
<dbReference type="EMBL" id="AE016826">
    <property type="protein sequence ID" value="AAO26843.1"/>
    <property type="molecule type" value="Genomic_DNA"/>
</dbReference>
<dbReference type="RefSeq" id="WP_011091244.1">
    <property type="nucleotide sequence ID" value="NC_004545.1"/>
</dbReference>
<dbReference type="STRING" id="224915.bbp_109"/>
<dbReference type="KEGG" id="bab:bbp_109"/>
<dbReference type="eggNOG" id="COG2878">
    <property type="taxonomic scope" value="Bacteria"/>
</dbReference>
<dbReference type="HOGENOM" id="CLU_063448_2_0_6"/>
<dbReference type="OrthoDB" id="9789936at2"/>
<dbReference type="Proteomes" id="UP000000601">
    <property type="component" value="Chromosome"/>
</dbReference>
<dbReference type="GO" id="GO:0005886">
    <property type="term" value="C:plasma membrane"/>
    <property type="evidence" value="ECO:0007669"/>
    <property type="project" value="UniProtKB-SubCell"/>
</dbReference>
<dbReference type="GO" id="GO:0051539">
    <property type="term" value="F:4 iron, 4 sulfur cluster binding"/>
    <property type="evidence" value="ECO:0007669"/>
    <property type="project" value="UniProtKB-UniRule"/>
</dbReference>
<dbReference type="GO" id="GO:0009055">
    <property type="term" value="F:electron transfer activity"/>
    <property type="evidence" value="ECO:0007669"/>
    <property type="project" value="InterPro"/>
</dbReference>
<dbReference type="GO" id="GO:0046872">
    <property type="term" value="F:metal ion binding"/>
    <property type="evidence" value="ECO:0007669"/>
    <property type="project" value="UniProtKB-KW"/>
</dbReference>
<dbReference type="GO" id="GO:0022900">
    <property type="term" value="P:electron transport chain"/>
    <property type="evidence" value="ECO:0007669"/>
    <property type="project" value="UniProtKB-UniRule"/>
</dbReference>
<dbReference type="Gene3D" id="3.30.70.20">
    <property type="match status" value="1"/>
</dbReference>
<dbReference type="Gene3D" id="1.10.15.40">
    <property type="entry name" value="Electron transport complex subunit B, putative Fe-S cluster"/>
    <property type="match status" value="1"/>
</dbReference>
<dbReference type="HAMAP" id="MF_00463">
    <property type="entry name" value="RsxB_RnfB"/>
    <property type="match status" value="1"/>
</dbReference>
<dbReference type="InterPro" id="IPR007202">
    <property type="entry name" value="4Fe-4S_dom"/>
</dbReference>
<dbReference type="InterPro" id="IPR017896">
    <property type="entry name" value="4Fe4S_Fe-S-bd"/>
</dbReference>
<dbReference type="InterPro" id="IPR017900">
    <property type="entry name" value="4Fe4S_Fe_S_CS"/>
</dbReference>
<dbReference type="InterPro" id="IPR010207">
    <property type="entry name" value="Elect_transpt_cplx_RnfB/RsxB"/>
</dbReference>
<dbReference type="InterPro" id="IPR050572">
    <property type="entry name" value="Fe-S_Ferredoxin"/>
</dbReference>
<dbReference type="InterPro" id="IPR016463">
    <property type="entry name" value="RnfB/RsxB_Proteobac"/>
</dbReference>
<dbReference type="NCBIfam" id="TIGR01944">
    <property type="entry name" value="rnfB"/>
    <property type="match status" value="1"/>
</dbReference>
<dbReference type="PANTHER" id="PTHR43687">
    <property type="entry name" value="ADENYLYLSULFATE REDUCTASE, BETA SUBUNIT"/>
    <property type="match status" value="1"/>
</dbReference>
<dbReference type="PANTHER" id="PTHR43687:SF1">
    <property type="entry name" value="FERREDOXIN III"/>
    <property type="match status" value="1"/>
</dbReference>
<dbReference type="Pfam" id="PF14697">
    <property type="entry name" value="Fer4_21"/>
    <property type="match status" value="1"/>
</dbReference>
<dbReference type="Pfam" id="PF04060">
    <property type="entry name" value="FeS"/>
    <property type="match status" value="1"/>
</dbReference>
<dbReference type="PIRSF" id="PIRSF005784">
    <property type="entry name" value="Elect_transpt_RnfB"/>
    <property type="match status" value="1"/>
</dbReference>
<dbReference type="SUPFAM" id="SSF54862">
    <property type="entry name" value="4Fe-4S ferredoxins"/>
    <property type="match status" value="1"/>
</dbReference>
<dbReference type="PROSITE" id="PS51656">
    <property type="entry name" value="4FE4S"/>
    <property type="match status" value="1"/>
</dbReference>
<dbReference type="PROSITE" id="PS00198">
    <property type="entry name" value="4FE4S_FER_1"/>
    <property type="match status" value="2"/>
</dbReference>
<dbReference type="PROSITE" id="PS51379">
    <property type="entry name" value="4FE4S_FER_2"/>
    <property type="match status" value="2"/>
</dbReference>
<keyword id="KW-0004">4Fe-4S</keyword>
<keyword id="KW-0997">Cell inner membrane</keyword>
<keyword id="KW-1003">Cell membrane</keyword>
<keyword id="KW-0249">Electron transport</keyword>
<keyword id="KW-0408">Iron</keyword>
<keyword id="KW-0411">Iron-sulfur</keyword>
<keyword id="KW-0472">Membrane</keyword>
<keyword id="KW-0479">Metal-binding</keyword>
<keyword id="KW-1185">Reference proteome</keyword>
<keyword id="KW-0677">Repeat</keyword>
<keyword id="KW-1278">Translocase</keyword>
<keyword id="KW-0813">Transport</keyword>
<comment type="function">
    <text evidence="1">Part of a membrane-bound complex that couples electron transfer with translocation of ions across the membrane.</text>
</comment>
<comment type="cofactor">
    <cofactor evidence="1">
        <name>[4Fe-4S] cluster</name>
        <dbReference type="ChEBI" id="CHEBI:49883"/>
    </cofactor>
    <text evidence="1">Binds 3 [4Fe-4S] clusters.</text>
</comment>
<comment type="subunit">
    <text evidence="1">The complex is composed of six subunits: RnfA, RnfB, RnfC, RnfD, RnfE and RnfG.</text>
</comment>
<comment type="subcellular location">
    <subcellularLocation>
        <location evidence="1">Cell inner membrane</location>
    </subcellularLocation>
</comment>
<comment type="similarity">
    <text evidence="1">Belongs to the 4Fe4S bacterial-type ferredoxin family. RnfB subfamily.</text>
</comment>
<gene>
    <name evidence="1" type="primary">rnfB</name>
    <name type="ordered locus">bbp_109</name>
</gene>
<accession>Q89AW9</accession>
<proteinExistence type="inferred from homology"/>
<name>RNFB_BUCBP</name>
<evidence type="ECO:0000255" key="1">
    <source>
        <dbReference type="HAMAP-Rule" id="MF_00463"/>
    </source>
</evidence>
<sequence>MIISIIIFSILSFILGVIVSLVSCFCKVKSNLSLINDIDELLPQMQCAQCGYPGCYAYSQAIVDGNENIYKCIPGGKEVVLKLENLLNKSDHRGNFLESLEDSVTYSIVEIDENNCVGCSKCRLVCPVDAVVGTYNFRHTVLIDSCTGCNLCIPLCPTNCIKKKIMFYE</sequence>
<feature type="chain" id="PRO_0000216270" description="Ion-translocating oxidoreductase complex subunit B">
    <location>
        <begin position="1"/>
        <end position="169"/>
    </location>
</feature>
<feature type="domain" description="4Fe-4S" evidence="1">
    <location>
        <begin position="30"/>
        <end position="89"/>
    </location>
</feature>
<feature type="domain" description="4Fe-4S ferredoxin-type 1" evidence="1">
    <location>
        <begin position="107"/>
        <end position="136"/>
    </location>
</feature>
<feature type="domain" description="4Fe-4S ferredoxin-type 2" evidence="1">
    <location>
        <begin position="137"/>
        <end position="166"/>
    </location>
</feature>
<feature type="region of interest" description="Hydrophobic" evidence="1">
    <location>
        <begin position="1"/>
        <end position="23"/>
    </location>
</feature>
<feature type="binding site" evidence="1">
    <location>
        <position position="47"/>
    </location>
    <ligand>
        <name>[4Fe-4S] cluster</name>
        <dbReference type="ChEBI" id="CHEBI:49883"/>
        <label>1</label>
    </ligand>
</feature>
<feature type="binding site" evidence="1">
    <location>
        <position position="50"/>
    </location>
    <ligand>
        <name>[4Fe-4S] cluster</name>
        <dbReference type="ChEBI" id="CHEBI:49883"/>
        <label>1</label>
    </ligand>
</feature>
<feature type="binding site" evidence="1">
    <location>
        <position position="55"/>
    </location>
    <ligand>
        <name>[4Fe-4S] cluster</name>
        <dbReference type="ChEBI" id="CHEBI:49883"/>
        <label>1</label>
    </ligand>
</feature>
<feature type="binding site" evidence="1">
    <location>
        <position position="72"/>
    </location>
    <ligand>
        <name>[4Fe-4S] cluster</name>
        <dbReference type="ChEBI" id="CHEBI:49883"/>
        <label>1</label>
    </ligand>
</feature>
<feature type="binding site" evidence="1">
    <location>
        <position position="116"/>
    </location>
    <ligand>
        <name>[4Fe-4S] cluster</name>
        <dbReference type="ChEBI" id="CHEBI:49883"/>
        <label>2</label>
    </ligand>
</feature>
<feature type="binding site" evidence="1">
    <location>
        <position position="119"/>
    </location>
    <ligand>
        <name>[4Fe-4S] cluster</name>
        <dbReference type="ChEBI" id="CHEBI:49883"/>
        <label>2</label>
    </ligand>
</feature>
<feature type="binding site" evidence="1">
    <location>
        <position position="122"/>
    </location>
    <ligand>
        <name>[4Fe-4S] cluster</name>
        <dbReference type="ChEBI" id="CHEBI:49883"/>
        <label>2</label>
    </ligand>
</feature>
<feature type="binding site" evidence="1">
    <location>
        <position position="126"/>
    </location>
    <ligand>
        <name>[4Fe-4S] cluster</name>
        <dbReference type="ChEBI" id="CHEBI:49883"/>
        <label>3</label>
    </ligand>
</feature>
<feature type="binding site" evidence="1">
    <location>
        <position position="146"/>
    </location>
    <ligand>
        <name>[4Fe-4S] cluster</name>
        <dbReference type="ChEBI" id="CHEBI:49883"/>
        <label>3</label>
    </ligand>
</feature>
<feature type="binding site" evidence="1">
    <location>
        <position position="149"/>
    </location>
    <ligand>
        <name>[4Fe-4S] cluster</name>
        <dbReference type="ChEBI" id="CHEBI:49883"/>
        <label>3</label>
    </ligand>
</feature>
<feature type="binding site" evidence="1">
    <location>
        <position position="152"/>
    </location>
    <ligand>
        <name>[4Fe-4S] cluster</name>
        <dbReference type="ChEBI" id="CHEBI:49883"/>
        <label>3</label>
    </ligand>
</feature>
<feature type="binding site" evidence="1">
    <location>
        <position position="156"/>
    </location>
    <ligand>
        <name>[4Fe-4S] cluster</name>
        <dbReference type="ChEBI" id="CHEBI:49883"/>
        <label>2</label>
    </ligand>
</feature>
<reference key="1">
    <citation type="journal article" date="2003" name="Proc. Natl. Acad. Sci. U.S.A.">
        <title>Reductive genome evolution in Buchnera aphidicola.</title>
        <authorList>
            <person name="van Ham R.C.H.J."/>
            <person name="Kamerbeek J."/>
            <person name="Palacios C."/>
            <person name="Rausell C."/>
            <person name="Abascal F."/>
            <person name="Bastolla U."/>
            <person name="Fernandez J.M."/>
            <person name="Jimenez L."/>
            <person name="Postigo M."/>
            <person name="Silva F.J."/>
            <person name="Tamames J."/>
            <person name="Viguera E."/>
            <person name="Latorre A."/>
            <person name="Valencia A."/>
            <person name="Moran F."/>
            <person name="Moya A."/>
        </authorList>
    </citation>
    <scope>NUCLEOTIDE SEQUENCE [LARGE SCALE GENOMIC DNA]</scope>
    <source>
        <strain>Bp</strain>
    </source>
</reference>
<organism>
    <name type="scientific">Buchnera aphidicola subsp. Baizongia pistaciae (strain Bp)</name>
    <dbReference type="NCBI Taxonomy" id="224915"/>
    <lineage>
        <taxon>Bacteria</taxon>
        <taxon>Pseudomonadati</taxon>
        <taxon>Pseudomonadota</taxon>
        <taxon>Gammaproteobacteria</taxon>
        <taxon>Enterobacterales</taxon>
        <taxon>Erwiniaceae</taxon>
        <taxon>Buchnera</taxon>
    </lineage>
</organism>